<name>DSCC_ASPFU</name>
<dbReference type="EMBL" id="AAHF01000005">
    <property type="protein sequence ID" value="EAL89719.1"/>
    <property type="molecule type" value="Genomic_DNA"/>
</dbReference>
<dbReference type="RefSeq" id="XP_751757.1">
    <property type="nucleotide sequence ID" value="XM_746664.1"/>
</dbReference>
<dbReference type="FunCoup" id="Q4WPW5">
    <property type="interactions" value="13"/>
</dbReference>
<dbReference type="STRING" id="330879.Q4WPW5"/>
<dbReference type="EnsemblFungi" id="EAL89719">
    <property type="protein sequence ID" value="EAL89719"/>
    <property type="gene ID" value="AFUA_4G10700"/>
</dbReference>
<dbReference type="GeneID" id="3509554"/>
<dbReference type="KEGG" id="afm:AFUA_4G10700"/>
<dbReference type="VEuPathDB" id="FungiDB:Afu4g10700"/>
<dbReference type="eggNOG" id="ENOG502S7DP">
    <property type="taxonomic scope" value="Eukaryota"/>
</dbReference>
<dbReference type="HOGENOM" id="CLU_035821_0_0_1"/>
<dbReference type="InParanoid" id="Q4WPW5"/>
<dbReference type="OMA" id="RIYVNCS"/>
<dbReference type="OrthoDB" id="2556122at2759"/>
<dbReference type="UniPathway" id="UPA00143"/>
<dbReference type="Proteomes" id="UP000002530">
    <property type="component" value="Chromosome 4"/>
</dbReference>
<dbReference type="GO" id="GO:0044695">
    <property type="term" value="C:Dsc E3 ubiquitin ligase complex"/>
    <property type="evidence" value="ECO:0000318"/>
    <property type="project" value="GO_Central"/>
</dbReference>
<dbReference type="GO" id="GO:0005783">
    <property type="term" value="C:endoplasmic reticulum"/>
    <property type="evidence" value="ECO:0000318"/>
    <property type="project" value="GO_Central"/>
</dbReference>
<dbReference type="GO" id="GO:0005789">
    <property type="term" value="C:endoplasmic reticulum membrane"/>
    <property type="evidence" value="ECO:0007669"/>
    <property type="project" value="UniProtKB-SubCell"/>
</dbReference>
<dbReference type="GO" id="GO:0051603">
    <property type="term" value="P:proteolysis involved in protein catabolic process"/>
    <property type="evidence" value="ECO:0000315"/>
    <property type="project" value="AspGD"/>
</dbReference>
<dbReference type="CDD" id="cd17039">
    <property type="entry name" value="Ubl_ubiquitin_like"/>
    <property type="match status" value="1"/>
</dbReference>
<dbReference type="FunFam" id="3.10.20.90:FF:000406">
    <property type="entry name" value="Putative conserved membrane protein"/>
    <property type="match status" value="1"/>
</dbReference>
<dbReference type="Gene3D" id="3.10.20.90">
    <property type="entry name" value="Phosphatidylinositol 3-kinase Catalytic Subunit, Chain A, domain 1"/>
    <property type="match status" value="1"/>
</dbReference>
<dbReference type="InterPro" id="IPR045226">
    <property type="entry name" value="Dsc3"/>
</dbReference>
<dbReference type="InterPro" id="IPR025390">
    <property type="entry name" value="Dsc3_C"/>
</dbReference>
<dbReference type="InterPro" id="IPR019413">
    <property type="entry name" value="Dsc3_ub-like_dom"/>
</dbReference>
<dbReference type="InterPro" id="IPR029071">
    <property type="entry name" value="Ubiquitin-like_domsf"/>
</dbReference>
<dbReference type="PANTHER" id="PTHR28049:SF1">
    <property type="entry name" value="DSC E3 UBIQUITIN LIGASE COMPLEX SUBUNIT 3"/>
    <property type="match status" value="1"/>
</dbReference>
<dbReference type="PANTHER" id="PTHR28049">
    <property type="entry name" value="TRANSMEMBRANE PROTEIN YOR223W"/>
    <property type="match status" value="1"/>
</dbReference>
<dbReference type="Pfam" id="PF13373">
    <property type="entry name" value="Dsc3_C"/>
    <property type="match status" value="1"/>
</dbReference>
<dbReference type="Pfam" id="PF10302">
    <property type="entry name" value="Dsc3_N"/>
    <property type="match status" value="1"/>
</dbReference>
<dbReference type="SUPFAM" id="SSF54236">
    <property type="entry name" value="Ubiquitin-like"/>
    <property type="match status" value="1"/>
</dbReference>
<comment type="function">
    <text evidence="4">Component of the DSC E3 ubiquitin ligase complex which is required for the srbA transcriptional activator proteolytic cleavage to release the soluble transcription factor from the membrane in low oxygen or sterol conditions (PubMed:23104569). Required for growth during hypoxia and triazole drug susceptibility, as well as for virulence in a murine model of invasive pulmonary aspergillosis (IPA) (PubMed:23104569).</text>
</comment>
<comment type="pathway">
    <text evidence="7">Protein modification; protein ubiquitination.</text>
</comment>
<comment type="subunit">
    <text evidence="7">Component of the DSC E3 ubiquitin ligase complex composed of dscA, dscB, dscC and dscD.</text>
</comment>
<comment type="subcellular location">
    <subcellularLocation>
        <location evidence="7">Endoplasmic reticulum membrane</location>
        <topology evidence="1">Multi-pass membrane protein</topology>
    </subcellularLocation>
</comment>
<comment type="disruption phenotype">
    <text evidence="4">Impairs growth on solid media under hypoxia and leads to triazole susceptibility (PubMed:23104569). Impairs virulence in a murine model of invasive pulmonary aspergillosis (IPA) (PubMed:23104569).</text>
</comment>
<comment type="similarity">
    <text evidence="6">Belongs to the dsc3 family.</text>
</comment>
<keyword id="KW-0256">Endoplasmic reticulum</keyword>
<keyword id="KW-0325">Glycoprotein</keyword>
<keyword id="KW-0472">Membrane</keyword>
<keyword id="KW-1185">Reference proteome</keyword>
<keyword id="KW-0812">Transmembrane</keyword>
<keyword id="KW-1133">Transmembrane helix</keyword>
<keyword id="KW-0833">Ubl conjugation pathway</keyword>
<sequence>MTFPAFLSPDPTWDGDSTGGPLLLTVRFSASIPDFPLDIENPDITTAAGLKQLIRTHLPPNLSSHRLRLIYAGRGLEDATPLSVSLKLPPSPSRTPVVQEDATTVKGKGKAPIREQPRLYIHCSIGDIVLSDADLAAEAAIATTLQQEQADEDYTGRKKQQQPPPSTTSAPRGFDRLLSAGFTPSEVSALRSQFMAIQSVSRTPDTMPTGAELRELEDRWMDEGSSAMAAGVPGGGEGISFADDDGGFGAGSRGAMDDMLWGAVMGFFWPVGCAMWLRREEGVWSWRKGLAVFVGVVINVAFGAMRIMN</sequence>
<protein>
    <recommendedName>
        <fullName evidence="5">DSC E3 ubiquitin ligase complex subunit C</fullName>
    </recommendedName>
    <alternativeName>
        <fullName evidence="5">Defective for SREBP cleavage protein C</fullName>
    </alternativeName>
</protein>
<organism>
    <name type="scientific">Aspergillus fumigatus (strain ATCC MYA-4609 / CBS 101355 / FGSC A1100 / Af293)</name>
    <name type="common">Neosartorya fumigata</name>
    <dbReference type="NCBI Taxonomy" id="330879"/>
    <lineage>
        <taxon>Eukaryota</taxon>
        <taxon>Fungi</taxon>
        <taxon>Dikarya</taxon>
        <taxon>Ascomycota</taxon>
        <taxon>Pezizomycotina</taxon>
        <taxon>Eurotiomycetes</taxon>
        <taxon>Eurotiomycetidae</taxon>
        <taxon>Eurotiales</taxon>
        <taxon>Aspergillaceae</taxon>
        <taxon>Aspergillus</taxon>
        <taxon>Aspergillus subgen. Fumigati</taxon>
    </lineage>
</organism>
<feature type="chain" id="PRO_0000460156" description="DSC E3 ubiquitin ligase complex subunit C">
    <location>
        <begin position="1"/>
        <end position="309"/>
    </location>
</feature>
<feature type="transmembrane region" description="Helical" evidence="1">
    <location>
        <begin position="257"/>
        <end position="277"/>
    </location>
</feature>
<feature type="transmembrane region" description="Helical" evidence="1">
    <location>
        <begin position="289"/>
        <end position="309"/>
    </location>
</feature>
<feature type="region of interest" description="Disordered" evidence="3">
    <location>
        <begin position="88"/>
        <end position="110"/>
    </location>
</feature>
<feature type="region of interest" description="Disordered" evidence="3">
    <location>
        <begin position="148"/>
        <end position="177"/>
    </location>
</feature>
<feature type="glycosylation site" description="N-linked (GlcNAc...) asparagine" evidence="2">
    <location>
        <position position="61"/>
    </location>
</feature>
<reference key="1">
    <citation type="journal article" date="2005" name="Nature">
        <title>Genomic sequence of the pathogenic and allergenic filamentous fungus Aspergillus fumigatus.</title>
        <authorList>
            <person name="Nierman W.C."/>
            <person name="Pain A."/>
            <person name="Anderson M.J."/>
            <person name="Wortman J.R."/>
            <person name="Kim H.S."/>
            <person name="Arroyo J."/>
            <person name="Berriman M."/>
            <person name="Abe K."/>
            <person name="Archer D.B."/>
            <person name="Bermejo C."/>
            <person name="Bennett J.W."/>
            <person name="Bowyer P."/>
            <person name="Chen D."/>
            <person name="Collins M."/>
            <person name="Coulsen R."/>
            <person name="Davies R."/>
            <person name="Dyer P.S."/>
            <person name="Farman M.L."/>
            <person name="Fedorova N."/>
            <person name="Fedorova N.D."/>
            <person name="Feldblyum T.V."/>
            <person name="Fischer R."/>
            <person name="Fosker N."/>
            <person name="Fraser A."/>
            <person name="Garcia J.L."/>
            <person name="Garcia M.J."/>
            <person name="Goble A."/>
            <person name="Goldman G.H."/>
            <person name="Gomi K."/>
            <person name="Griffith-Jones S."/>
            <person name="Gwilliam R."/>
            <person name="Haas B.J."/>
            <person name="Haas H."/>
            <person name="Harris D.E."/>
            <person name="Horiuchi H."/>
            <person name="Huang J."/>
            <person name="Humphray S."/>
            <person name="Jimenez J."/>
            <person name="Keller N."/>
            <person name="Khouri H."/>
            <person name="Kitamoto K."/>
            <person name="Kobayashi T."/>
            <person name="Konzack S."/>
            <person name="Kulkarni R."/>
            <person name="Kumagai T."/>
            <person name="Lafton A."/>
            <person name="Latge J.-P."/>
            <person name="Li W."/>
            <person name="Lord A."/>
            <person name="Lu C."/>
            <person name="Majoros W.H."/>
            <person name="May G.S."/>
            <person name="Miller B.L."/>
            <person name="Mohamoud Y."/>
            <person name="Molina M."/>
            <person name="Monod M."/>
            <person name="Mouyna I."/>
            <person name="Mulligan S."/>
            <person name="Murphy L.D."/>
            <person name="O'Neil S."/>
            <person name="Paulsen I."/>
            <person name="Penalva M.A."/>
            <person name="Pertea M."/>
            <person name="Price C."/>
            <person name="Pritchard B.L."/>
            <person name="Quail M.A."/>
            <person name="Rabbinowitsch E."/>
            <person name="Rawlins N."/>
            <person name="Rajandream M.A."/>
            <person name="Reichard U."/>
            <person name="Renauld H."/>
            <person name="Robson G.D."/>
            <person name="Rodriguez de Cordoba S."/>
            <person name="Rodriguez-Pena J.M."/>
            <person name="Ronning C.M."/>
            <person name="Rutter S."/>
            <person name="Salzberg S.L."/>
            <person name="Sanchez M."/>
            <person name="Sanchez-Ferrero J.C."/>
            <person name="Saunders D."/>
            <person name="Seeger K."/>
            <person name="Squares R."/>
            <person name="Squares S."/>
            <person name="Takeuchi M."/>
            <person name="Tekaia F."/>
            <person name="Turner G."/>
            <person name="Vazquez de Aldana C.R."/>
            <person name="Weidman J."/>
            <person name="White O."/>
            <person name="Woodward J.R."/>
            <person name="Yu J.-H."/>
            <person name="Fraser C.M."/>
            <person name="Galagan J.E."/>
            <person name="Asai K."/>
            <person name="Machida M."/>
            <person name="Hall N."/>
            <person name="Barrell B.G."/>
            <person name="Denning D.W."/>
        </authorList>
    </citation>
    <scope>NUCLEOTIDE SEQUENCE [LARGE SCALE GENOMIC DNA]</scope>
    <source>
        <strain>ATCC MYA-4609 / CBS 101355 / FGSC A1100 / Af293</strain>
    </source>
</reference>
<reference key="2">
    <citation type="journal article" date="2012" name="Eukaryot. Cell">
        <title>Dsc orthologs are required for hypoxia adaptation, triazole drug responses, and fungal virulence in Aspergillus fumigatus.</title>
        <authorList>
            <person name="Willger S.D."/>
            <person name="Cornish E.J."/>
            <person name="Chung D."/>
            <person name="Fleming B.A."/>
            <person name="Lehmann M.M."/>
            <person name="Puttikamonkul S."/>
            <person name="Cramer R.A."/>
        </authorList>
    </citation>
    <scope>FUNCTION</scope>
    <scope>DISRUPTION PHENOTYPE</scope>
</reference>
<evidence type="ECO:0000255" key="1"/>
<evidence type="ECO:0000255" key="2">
    <source>
        <dbReference type="PROSITE-ProRule" id="PRU00498"/>
    </source>
</evidence>
<evidence type="ECO:0000256" key="3">
    <source>
        <dbReference type="SAM" id="MobiDB-lite"/>
    </source>
</evidence>
<evidence type="ECO:0000269" key="4">
    <source>
    </source>
</evidence>
<evidence type="ECO:0000303" key="5">
    <source>
    </source>
</evidence>
<evidence type="ECO:0000305" key="6"/>
<evidence type="ECO:0000305" key="7">
    <source>
    </source>
</evidence>
<gene>
    <name evidence="5" type="primary">dscC</name>
    <name type="ORF">AFUA_4G10700</name>
</gene>
<accession>Q4WPW5</accession>
<proteinExistence type="inferred from homology"/>